<feature type="chain" id="PRO_0000159062" description="Putative sulfur carrier protein YedF">
    <location>
        <begin position="1"/>
        <end position="77"/>
    </location>
</feature>
<feature type="active site" description="Cysteine persulfide intermediate" evidence="1">
    <location>
        <position position="17"/>
    </location>
</feature>
<feature type="strand" evidence="3">
    <location>
        <begin position="6"/>
        <end position="10"/>
    </location>
</feature>
<feature type="strand" evidence="3">
    <location>
        <begin position="16"/>
        <end position="20"/>
    </location>
</feature>
<feature type="helix" evidence="3">
    <location>
        <begin position="22"/>
        <end position="27"/>
    </location>
</feature>
<feature type="turn" evidence="3">
    <location>
        <begin position="28"/>
        <end position="30"/>
    </location>
</feature>
<feature type="strand" evidence="3">
    <location>
        <begin position="36"/>
        <end position="42"/>
    </location>
</feature>
<feature type="strand" evidence="3">
    <location>
        <begin position="44"/>
        <end position="47"/>
    </location>
</feature>
<feature type="helix" evidence="3">
    <location>
        <begin position="49"/>
        <end position="57"/>
    </location>
</feature>
<feature type="strand" evidence="3">
    <location>
        <begin position="60"/>
        <end position="66"/>
    </location>
</feature>
<feature type="strand" evidence="3">
    <location>
        <begin position="68"/>
        <end position="76"/>
    </location>
</feature>
<protein>
    <recommendedName>
        <fullName>Putative sulfur carrier protein YedF</fullName>
    </recommendedName>
</protein>
<comment type="similarity">
    <text evidence="2">Belongs to the sulfur carrier protein TusA family.</text>
</comment>
<name>YEDF_ECOLI</name>
<organism>
    <name type="scientific">Escherichia coli (strain K12)</name>
    <dbReference type="NCBI Taxonomy" id="83333"/>
    <lineage>
        <taxon>Bacteria</taxon>
        <taxon>Pseudomonadati</taxon>
        <taxon>Pseudomonadota</taxon>
        <taxon>Gammaproteobacteria</taxon>
        <taxon>Enterobacterales</taxon>
        <taxon>Enterobacteriaceae</taxon>
        <taxon>Escherichia</taxon>
    </lineage>
</organism>
<reference key="1">
    <citation type="journal article" date="1993" name="J. Gen. Microbiol.">
        <title>Organization of the Escherichia coli and Salmonella typhimurium chromosomes between flagellar regions IIIa and IIIb, including a large non-coding region.</title>
        <authorList>
            <person name="Raha M."/>
            <person name="Kihara M."/>
            <person name="Kawagishi I."/>
            <person name="Macnab R.M."/>
        </authorList>
    </citation>
    <scope>NUCLEOTIDE SEQUENCE [GENOMIC DNA]</scope>
</reference>
<reference key="2">
    <citation type="journal article" date="1996" name="DNA Res.">
        <title>A 460-kb DNA sequence of the Escherichia coli K-12 genome corresponding to the 40.1-50.0 min region on the linkage map.</title>
        <authorList>
            <person name="Itoh T."/>
            <person name="Aiba H."/>
            <person name="Baba T."/>
            <person name="Fujita K."/>
            <person name="Hayashi K."/>
            <person name="Inada T."/>
            <person name="Isono K."/>
            <person name="Kasai H."/>
            <person name="Kimura S."/>
            <person name="Kitakawa M."/>
            <person name="Kitagawa M."/>
            <person name="Makino K."/>
            <person name="Miki T."/>
            <person name="Mizobuchi K."/>
            <person name="Mori H."/>
            <person name="Mori T."/>
            <person name="Motomura K."/>
            <person name="Nakade S."/>
            <person name="Nakamura Y."/>
            <person name="Nashimoto H."/>
            <person name="Nishio Y."/>
            <person name="Oshima T."/>
            <person name="Saito N."/>
            <person name="Sampei G."/>
            <person name="Seki Y."/>
            <person name="Sivasundaram S."/>
            <person name="Tagami H."/>
            <person name="Takeda J."/>
            <person name="Takemoto K."/>
            <person name="Wada C."/>
            <person name="Yamamoto Y."/>
            <person name="Horiuchi T."/>
        </authorList>
    </citation>
    <scope>NUCLEOTIDE SEQUENCE [LARGE SCALE GENOMIC DNA]</scope>
    <source>
        <strain>K12 / W3110 / ATCC 27325 / DSM 5911</strain>
    </source>
</reference>
<reference key="3">
    <citation type="journal article" date="1997" name="Science">
        <title>The complete genome sequence of Escherichia coli K-12.</title>
        <authorList>
            <person name="Blattner F.R."/>
            <person name="Plunkett G. III"/>
            <person name="Bloch C.A."/>
            <person name="Perna N.T."/>
            <person name="Burland V."/>
            <person name="Riley M."/>
            <person name="Collado-Vides J."/>
            <person name="Glasner J.D."/>
            <person name="Rode C.K."/>
            <person name="Mayhew G.F."/>
            <person name="Gregor J."/>
            <person name="Davis N.W."/>
            <person name="Kirkpatrick H.A."/>
            <person name="Goeden M.A."/>
            <person name="Rose D.J."/>
            <person name="Mau B."/>
            <person name="Shao Y."/>
        </authorList>
    </citation>
    <scope>NUCLEOTIDE SEQUENCE [LARGE SCALE GENOMIC DNA]</scope>
    <source>
        <strain>K12 / MG1655 / ATCC 47076</strain>
    </source>
</reference>
<reference key="4">
    <citation type="journal article" date="2006" name="Mol. Syst. Biol.">
        <title>Highly accurate genome sequences of Escherichia coli K-12 strains MG1655 and W3110.</title>
        <authorList>
            <person name="Hayashi K."/>
            <person name="Morooka N."/>
            <person name="Yamamoto Y."/>
            <person name="Fujita K."/>
            <person name="Isono K."/>
            <person name="Choi S."/>
            <person name="Ohtsubo E."/>
            <person name="Baba T."/>
            <person name="Wanner B.L."/>
            <person name="Mori H."/>
            <person name="Horiuchi T."/>
        </authorList>
    </citation>
    <scope>NUCLEOTIDE SEQUENCE [LARGE SCALE GENOMIC DNA]</scope>
    <source>
        <strain>K12 / W3110 / ATCC 27325 / DSM 5911</strain>
    </source>
</reference>
<reference key="5">
    <citation type="journal article" date="2002" name="Proc. Natl. Acad. Sci. U.S.A.">
        <title>An NMR approach to structural proteomics.</title>
        <authorList>
            <person name="Yee A."/>
            <person name="Chang X."/>
            <person name="Pineda-Lucena A."/>
            <person name="Wu B."/>
            <person name="Semesi A."/>
            <person name="Le B."/>
            <person name="Ramelot T."/>
            <person name="Lee G.M."/>
            <person name="Bhattacharyya S."/>
            <person name="Gutierrez P."/>
            <person name="Denisov A."/>
            <person name="Lee C.-H."/>
            <person name="Cort J.R."/>
            <person name="Kozlov G."/>
            <person name="Liao J."/>
            <person name="Finak G."/>
            <person name="Chen L."/>
            <person name="Wishart D."/>
            <person name="Lee W."/>
            <person name="McIntosh L.P."/>
            <person name="Gehring K."/>
            <person name="Kennedy M.A."/>
            <person name="Edwards A.M."/>
            <person name="Arrowsmith C.H."/>
        </authorList>
    </citation>
    <scope>STRUCTURE BY NMR</scope>
</reference>
<dbReference type="EMBL" id="L13279">
    <property type="protein sequence ID" value="AAA82578.1"/>
    <property type="molecule type" value="Genomic_DNA"/>
</dbReference>
<dbReference type="EMBL" id="U00096">
    <property type="protein sequence ID" value="AAC74997.1"/>
    <property type="molecule type" value="Genomic_DNA"/>
</dbReference>
<dbReference type="EMBL" id="AP009048">
    <property type="protein sequence ID" value="BAA15758.1"/>
    <property type="molecule type" value="Genomic_DNA"/>
</dbReference>
<dbReference type="PIR" id="G64956">
    <property type="entry name" value="G64956"/>
</dbReference>
<dbReference type="RefSeq" id="NP_416440.1">
    <property type="nucleotide sequence ID" value="NC_000913.3"/>
</dbReference>
<dbReference type="RefSeq" id="WP_000790504.1">
    <property type="nucleotide sequence ID" value="NZ_STEB01000026.1"/>
</dbReference>
<dbReference type="PDB" id="1JE3">
    <property type="method" value="NMR"/>
    <property type="chains" value="A=1-77"/>
</dbReference>
<dbReference type="PDBsum" id="1JE3"/>
<dbReference type="BMRB" id="P0AA31"/>
<dbReference type="SMR" id="P0AA31"/>
<dbReference type="BioGRID" id="4261059">
    <property type="interactions" value="11"/>
</dbReference>
<dbReference type="FunCoup" id="P0AA31">
    <property type="interactions" value="5"/>
</dbReference>
<dbReference type="IntAct" id="P0AA31">
    <property type="interactions" value="4"/>
</dbReference>
<dbReference type="STRING" id="511145.b1930"/>
<dbReference type="jPOST" id="P0AA31"/>
<dbReference type="PaxDb" id="511145-b1930"/>
<dbReference type="EnsemblBacteria" id="AAC74997">
    <property type="protein sequence ID" value="AAC74997"/>
    <property type="gene ID" value="b1930"/>
</dbReference>
<dbReference type="GeneID" id="93775259"/>
<dbReference type="GeneID" id="946909"/>
<dbReference type="KEGG" id="ecj:JW1915"/>
<dbReference type="KEGG" id="eco:b1930"/>
<dbReference type="KEGG" id="ecoc:C3026_10945"/>
<dbReference type="PATRIC" id="fig|511145.12.peg.2012"/>
<dbReference type="EchoBASE" id="EB1613"/>
<dbReference type="eggNOG" id="COG0425">
    <property type="taxonomic scope" value="Bacteria"/>
</dbReference>
<dbReference type="HOGENOM" id="CLU_165255_0_0_6"/>
<dbReference type="InParanoid" id="P0AA31"/>
<dbReference type="OMA" id="PSEWRIL"/>
<dbReference type="OrthoDB" id="5325383at2"/>
<dbReference type="PhylomeDB" id="P0AA31"/>
<dbReference type="BioCyc" id="EcoCyc:EG11661-MONOMER"/>
<dbReference type="EvolutionaryTrace" id="P0AA31"/>
<dbReference type="PRO" id="PR:P0AA31"/>
<dbReference type="Proteomes" id="UP000000625">
    <property type="component" value="Chromosome"/>
</dbReference>
<dbReference type="GO" id="GO:0006974">
    <property type="term" value="P:DNA damage response"/>
    <property type="evidence" value="ECO:0000270"/>
    <property type="project" value="EcoliWiki"/>
</dbReference>
<dbReference type="CDD" id="cd03422">
    <property type="entry name" value="YedF"/>
    <property type="match status" value="1"/>
</dbReference>
<dbReference type="FunFam" id="3.30.110.40:FF:000001">
    <property type="entry name" value="SirA-like family protein"/>
    <property type="match status" value="1"/>
</dbReference>
<dbReference type="Gene3D" id="3.30.110.40">
    <property type="entry name" value="TusA-like domain"/>
    <property type="match status" value="1"/>
</dbReference>
<dbReference type="InterPro" id="IPR001455">
    <property type="entry name" value="TusA-like"/>
</dbReference>
<dbReference type="InterPro" id="IPR036868">
    <property type="entry name" value="TusA-like_sf"/>
</dbReference>
<dbReference type="InterPro" id="IPR049570">
    <property type="entry name" value="YedF"/>
</dbReference>
<dbReference type="NCBIfam" id="NF008242">
    <property type="entry name" value="PRK11018.1"/>
    <property type="match status" value="1"/>
</dbReference>
<dbReference type="PANTHER" id="PTHR33279">
    <property type="entry name" value="SULFUR CARRIER PROTEIN YEDF-RELATED"/>
    <property type="match status" value="1"/>
</dbReference>
<dbReference type="PANTHER" id="PTHR33279:SF6">
    <property type="entry name" value="SULFUR CARRIER PROTEIN YEDF-RELATED"/>
    <property type="match status" value="1"/>
</dbReference>
<dbReference type="Pfam" id="PF01206">
    <property type="entry name" value="TusA"/>
    <property type="match status" value="1"/>
</dbReference>
<dbReference type="SUPFAM" id="SSF64307">
    <property type="entry name" value="SirA-like"/>
    <property type="match status" value="1"/>
</dbReference>
<dbReference type="PROSITE" id="PS01148">
    <property type="entry name" value="UPF0033"/>
    <property type="match status" value="1"/>
</dbReference>
<sequence>MKNIVPDYRLDMVGEPCPYPAVATLEAMPQLKKGEILEVVSDCPQSINNIPLDARNHGYTVLDIQQDGPTIRYLIQK</sequence>
<accession>P0AA31</accession>
<accession>P31065</accession>
<proteinExistence type="evidence at protein level"/>
<keyword id="KW-0002">3D-structure</keyword>
<keyword id="KW-1185">Reference proteome</keyword>
<evidence type="ECO:0000250" key="1">
    <source>
        <dbReference type="UniProtKB" id="P0A890"/>
    </source>
</evidence>
<evidence type="ECO:0000305" key="2"/>
<evidence type="ECO:0007829" key="3">
    <source>
        <dbReference type="PDB" id="1JE3"/>
    </source>
</evidence>
<gene>
    <name type="primary">yedF</name>
    <name type="ordered locus">b1930</name>
    <name type="ordered locus">JW1915</name>
</gene>